<reference key="1">
    <citation type="journal article" date="1990" name="Nucleic Acids Res.">
        <title>The nucleotide sequence of pathogenesis-related (PR) 1b protein gene of tobacco.</title>
        <authorList>
            <person name="Ohshima M."/>
            <person name="Harada N."/>
            <person name="Matsuoka M."/>
            <person name="Ohashi Y."/>
        </authorList>
    </citation>
    <scope>NUCLEOTIDE SEQUENCE [GENOMIC DNA]</scope>
    <source>
        <strain>cv. Samsun NN</strain>
        <tissue>Leaf</tissue>
    </source>
</reference>
<reference key="2">
    <citation type="journal article" date="1986" name="EMBO J.">
        <title>Molecular characterization of messenger RNAs for 'pathogenesis-related' proteins 1a, 1b and 1c, induced by TMV infection of tobacco.</title>
        <authorList>
            <person name="Cornelissen B.J.C."/>
            <person name="Hooft van Huijsduijnen R.A.M."/>
            <person name="van Loon L.C."/>
            <person name="Bol J.F."/>
        </authorList>
    </citation>
    <scope>NUCLEOTIDE SEQUENCE</scope>
    <source>
        <strain>cv. Samsun NN</strain>
    </source>
</reference>
<reference key="3">
    <citation type="journal article" date="1988" name="Nucleic Acids Res.">
        <title>Isolation and nucleotide sequence of cDNA clones for the pathogenesis-related proteins PR1a, PR1b and PR1c of Nicotiana tabacum cv. Xanthi nc induced by TMV infection.</title>
        <authorList>
            <person name="Cutt J.R."/>
            <person name="Dixon D.D."/>
            <person name="Carr J.P."/>
            <person name="Klessig D.F."/>
        </authorList>
    </citation>
    <scope>NUCLEOTIDE SEQUENCE [MRNA] OF 16-168</scope>
    <source>
        <strain>cv. Xanthi</strain>
    </source>
</reference>
<reference key="4">
    <citation type="journal article" date="1991" name="EMBO J.">
        <title>Differential targeting of the tobacco PR-1 pathogenesis-related proteins to the extracellular space and vacuoles of crystal idioblasts.</title>
        <authorList>
            <person name="Dixon D.C."/>
            <person name="Cutt J.R."/>
            <person name="Klessig D.F."/>
        </authorList>
    </citation>
    <scope>SUBCELLULAR LOCATION</scope>
</reference>
<name>PR1B_TOBAC</name>
<accession>P07053</accession>
<keyword id="KW-1015">Disulfide bond</keyword>
<keyword id="KW-0568">Pathogenesis-related protein</keyword>
<keyword id="KW-0611">Plant defense</keyword>
<keyword id="KW-1185">Reference proteome</keyword>
<keyword id="KW-0732">Signal</keyword>
<keyword id="KW-0926">Vacuole</keyword>
<comment type="function">
    <text>Probably involved in the defense reaction of plants against pathogens.</text>
</comment>
<comment type="subcellular location">
    <subcellularLocation>
        <location evidence="2">Vacuole</location>
    </subcellularLocation>
    <text>Accumulates in within the vacuoles of specialized cells known as crystal idioblasts.</text>
</comment>
<comment type="induction">
    <text>Synthesized during pathogen infection or other stress-related responses.</text>
</comment>
<comment type="PTM">
    <text evidence="1">Three disulfide bonds are present.</text>
</comment>
<comment type="similarity">
    <text evidence="3">Belongs to the CRISP family.</text>
</comment>
<organism>
    <name type="scientific">Nicotiana tabacum</name>
    <name type="common">Common tobacco</name>
    <dbReference type="NCBI Taxonomy" id="4097"/>
    <lineage>
        <taxon>Eukaryota</taxon>
        <taxon>Viridiplantae</taxon>
        <taxon>Streptophyta</taxon>
        <taxon>Embryophyta</taxon>
        <taxon>Tracheophyta</taxon>
        <taxon>Spermatophyta</taxon>
        <taxon>Magnoliopsida</taxon>
        <taxon>eudicotyledons</taxon>
        <taxon>Gunneridae</taxon>
        <taxon>Pentapetalae</taxon>
        <taxon>asterids</taxon>
        <taxon>lamiids</taxon>
        <taxon>Solanales</taxon>
        <taxon>Solanaceae</taxon>
        <taxon>Nicotianoideae</taxon>
        <taxon>Nicotianeae</taxon>
        <taxon>Nicotiana</taxon>
    </lineage>
</organism>
<sequence>MGFFLFSQMPSFFLVSTLLLFLIISHSSHAQNSQQDYLDAHNTARADVGVEPLTWDNGVAAYAQNYVSQLAADCNLVHSHGQYGENLAQGSGDFMTAAKAVEMWVDEKQYYDHDSNTCAQGQVCGHYTQVVWRNSVRVGCARVKCNNGGYVVSCNYDPPGNVIGQSPY</sequence>
<evidence type="ECO:0000250" key="1"/>
<evidence type="ECO:0000269" key="2">
    <source>
    </source>
</evidence>
<evidence type="ECO:0000305" key="3"/>
<proteinExistence type="evidence at transcript level"/>
<protein>
    <recommendedName>
        <fullName>Pathogenesis-related protein 1B</fullName>
        <shortName>PR-1B</shortName>
    </recommendedName>
</protein>
<feature type="signal peptide">
    <location>
        <begin position="1"/>
        <end position="30"/>
    </location>
</feature>
<feature type="chain" id="PRO_0000006301" description="Pathogenesis-related protein 1B">
    <location>
        <begin position="31"/>
        <end position="168"/>
    </location>
</feature>
<feature type="domain" description="SCP">
    <location>
        <begin position="38"/>
        <end position="156"/>
    </location>
</feature>
<feature type="sequence conflict" description="In Ref. 3; CAA31009." evidence="3" ref="3">
    <original>S</original>
    <variation>A</variation>
    <location>
        <position position="16"/>
    </location>
</feature>
<dbReference type="EMBL" id="D90197">
    <property type="protein sequence ID" value="BAA14221.1"/>
    <property type="molecule type" value="mRNA"/>
</dbReference>
<dbReference type="EMBL" id="X03465">
    <property type="protein sequence ID" value="CAA27183.1"/>
    <property type="molecule type" value="mRNA"/>
</dbReference>
<dbReference type="EMBL" id="X12486">
    <property type="protein sequence ID" value="CAA31009.1"/>
    <property type="molecule type" value="mRNA"/>
</dbReference>
<dbReference type="EMBL" id="X17680">
    <property type="protein sequence ID" value="CAA35665.1"/>
    <property type="molecule type" value="Genomic_DNA"/>
</dbReference>
<dbReference type="PIR" id="A25006">
    <property type="entry name" value="A25006"/>
</dbReference>
<dbReference type="PIR" id="B24620">
    <property type="entry name" value="B24620"/>
</dbReference>
<dbReference type="SMR" id="P07053"/>
<dbReference type="STRING" id="4097.P07053"/>
<dbReference type="PaxDb" id="4097-P07053"/>
<dbReference type="Proteomes" id="UP000084051">
    <property type="component" value="Unplaced"/>
</dbReference>
<dbReference type="GO" id="GO:0005615">
    <property type="term" value="C:extracellular space"/>
    <property type="evidence" value="ECO:0000318"/>
    <property type="project" value="GO_Central"/>
</dbReference>
<dbReference type="GO" id="GO:0005773">
    <property type="term" value="C:vacuole"/>
    <property type="evidence" value="ECO:0007669"/>
    <property type="project" value="UniProtKB-SubCell"/>
</dbReference>
<dbReference type="GO" id="GO:0006952">
    <property type="term" value="P:defense response"/>
    <property type="evidence" value="ECO:0007669"/>
    <property type="project" value="UniProtKB-KW"/>
</dbReference>
<dbReference type="GO" id="GO:0019953">
    <property type="term" value="P:sexual reproduction"/>
    <property type="evidence" value="ECO:0000318"/>
    <property type="project" value="GO_Central"/>
</dbReference>
<dbReference type="CDD" id="cd05381">
    <property type="entry name" value="CAP_PR-1"/>
    <property type="match status" value="1"/>
</dbReference>
<dbReference type="FunFam" id="3.40.33.10:FF:000006">
    <property type="entry name" value="Putative pathogenesis-related protein 1"/>
    <property type="match status" value="1"/>
</dbReference>
<dbReference type="Gene3D" id="3.40.33.10">
    <property type="entry name" value="CAP"/>
    <property type="match status" value="1"/>
</dbReference>
<dbReference type="InterPro" id="IPR018244">
    <property type="entry name" value="Allrgn_V5/Tpx1_CS"/>
</dbReference>
<dbReference type="InterPro" id="IPR014044">
    <property type="entry name" value="CAP_dom"/>
</dbReference>
<dbReference type="InterPro" id="IPR035940">
    <property type="entry name" value="CAP_sf"/>
</dbReference>
<dbReference type="InterPro" id="IPR001283">
    <property type="entry name" value="CRISP-related"/>
</dbReference>
<dbReference type="PANTHER" id="PTHR10334">
    <property type="entry name" value="CYSTEINE-RICH SECRETORY PROTEIN-RELATED"/>
    <property type="match status" value="1"/>
</dbReference>
<dbReference type="Pfam" id="PF00188">
    <property type="entry name" value="CAP"/>
    <property type="match status" value="1"/>
</dbReference>
<dbReference type="PRINTS" id="PR00837">
    <property type="entry name" value="V5TPXLIKE"/>
</dbReference>
<dbReference type="SMART" id="SM00198">
    <property type="entry name" value="SCP"/>
    <property type="match status" value="1"/>
</dbReference>
<dbReference type="SUPFAM" id="SSF55797">
    <property type="entry name" value="PR-1-like"/>
    <property type="match status" value="1"/>
</dbReference>
<dbReference type="PROSITE" id="PS01009">
    <property type="entry name" value="CRISP_1"/>
    <property type="match status" value="1"/>
</dbReference>
<dbReference type="PROSITE" id="PS01010">
    <property type="entry name" value="CRISP_2"/>
    <property type="match status" value="1"/>
</dbReference>